<organism>
    <name type="scientific">Yersinia pestis bv. Antiqua (strain Angola)</name>
    <dbReference type="NCBI Taxonomy" id="349746"/>
    <lineage>
        <taxon>Bacteria</taxon>
        <taxon>Pseudomonadati</taxon>
        <taxon>Pseudomonadota</taxon>
        <taxon>Gammaproteobacteria</taxon>
        <taxon>Enterobacterales</taxon>
        <taxon>Yersiniaceae</taxon>
        <taxon>Yersinia</taxon>
    </lineage>
</organism>
<feature type="chain" id="PRO_1000096705" description="DNA mismatch repair protein MutL">
    <location>
        <begin position="1"/>
        <end position="635"/>
    </location>
</feature>
<gene>
    <name evidence="1" type="primary">mutL</name>
    <name type="ordered locus">YpAngola_A0701</name>
</gene>
<reference key="1">
    <citation type="journal article" date="2010" name="J. Bacteriol.">
        <title>Genome sequence of the deep-rooted Yersinia pestis strain Angola reveals new insights into the evolution and pangenome of the plague bacterium.</title>
        <authorList>
            <person name="Eppinger M."/>
            <person name="Worsham P.L."/>
            <person name="Nikolich M.P."/>
            <person name="Riley D.R."/>
            <person name="Sebastian Y."/>
            <person name="Mou S."/>
            <person name="Achtman M."/>
            <person name="Lindler L.E."/>
            <person name="Ravel J."/>
        </authorList>
    </citation>
    <scope>NUCLEOTIDE SEQUENCE [LARGE SCALE GENOMIC DNA]</scope>
    <source>
        <strain>Angola</strain>
    </source>
</reference>
<evidence type="ECO:0000255" key="1">
    <source>
        <dbReference type="HAMAP-Rule" id="MF_00149"/>
    </source>
</evidence>
<dbReference type="EMBL" id="CP000901">
    <property type="protein sequence ID" value="ABX85002.1"/>
    <property type="molecule type" value="Genomic_DNA"/>
</dbReference>
<dbReference type="RefSeq" id="WP_012229092.1">
    <property type="nucleotide sequence ID" value="NC_010159.1"/>
</dbReference>
<dbReference type="SMR" id="A9QYN3"/>
<dbReference type="KEGG" id="ypg:YpAngola_A0701"/>
<dbReference type="PATRIC" id="fig|349746.12.peg.1649"/>
<dbReference type="GO" id="GO:0032300">
    <property type="term" value="C:mismatch repair complex"/>
    <property type="evidence" value="ECO:0007669"/>
    <property type="project" value="InterPro"/>
</dbReference>
<dbReference type="GO" id="GO:0005524">
    <property type="term" value="F:ATP binding"/>
    <property type="evidence" value="ECO:0007669"/>
    <property type="project" value="InterPro"/>
</dbReference>
<dbReference type="GO" id="GO:0016887">
    <property type="term" value="F:ATP hydrolysis activity"/>
    <property type="evidence" value="ECO:0007669"/>
    <property type="project" value="InterPro"/>
</dbReference>
<dbReference type="GO" id="GO:0140664">
    <property type="term" value="F:ATP-dependent DNA damage sensor activity"/>
    <property type="evidence" value="ECO:0007669"/>
    <property type="project" value="InterPro"/>
</dbReference>
<dbReference type="GO" id="GO:0030983">
    <property type="term" value="F:mismatched DNA binding"/>
    <property type="evidence" value="ECO:0007669"/>
    <property type="project" value="InterPro"/>
</dbReference>
<dbReference type="GO" id="GO:0006298">
    <property type="term" value="P:mismatch repair"/>
    <property type="evidence" value="ECO:0007669"/>
    <property type="project" value="UniProtKB-UniRule"/>
</dbReference>
<dbReference type="CDD" id="cd16926">
    <property type="entry name" value="HATPase_MutL-MLH-PMS-like"/>
    <property type="match status" value="1"/>
</dbReference>
<dbReference type="CDD" id="cd03482">
    <property type="entry name" value="MutL_Trans_MutL"/>
    <property type="match status" value="1"/>
</dbReference>
<dbReference type="FunFam" id="3.30.230.10:FF:000013">
    <property type="entry name" value="DNA mismatch repair endonuclease MutL"/>
    <property type="match status" value="1"/>
</dbReference>
<dbReference type="FunFam" id="3.30.565.10:FF:000003">
    <property type="entry name" value="DNA mismatch repair endonuclease MutL"/>
    <property type="match status" value="1"/>
</dbReference>
<dbReference type="FunFam" id="3.30.1370.100:FF:000002">
    <property type="entry name" value="DNA mismatch repair protein MutL"/>
    <property type="match status" value="1"/>
</dbReference>
<dbReference type="Gene3D" id="3.30.230.10">
    <property type="match status" value="1"/>
</dbReference>
<dbReference type="Gene3D" id="3.30.565.10">
    <property type="entry name" value="Histidine kinase-like ATPase, C-terminal domain"/>
    <property type="match status" value="1"/>
</dbReference>
<dbReference type="Gene3D" id="3.30.1540.20">
    <property type="entry name" value="MutL, C-terminal domain, dimerisation subdomain"/>
    <property type="match status" value="1"/>
</dbReference>
<dbReference type="Gene3D" id="3.30.1370.100">
    <property type="entry name" value="MutL, C-terminal domain, regulatory subdomain"/>
    <property type="match status" value="1"/>
</dbReference>
<dbReference type="HAMAP" id="MF_00149">
    <property type="entry name" value="DNA_mis_repair"/>
    <property type="match status" value="1"/>
</dbReference>
<dbReference type="InterPro" id="IPR014762">
    <property type="entry name" value="DNA_mismatch_repair_CS"/>
</dbReference>
<dbReference type="InterPro" id="IPR020667">
    <property type="entry name" value="DNA_mismatch_repair_MutL"/>
</dbReference>
<dbReference type="InterPro" id="IPR013507">
    <property type="entry name" value="DNA_mismatch_S5_2-like"/>
</dbReference>
<dbReference type="InterPro" id="IPR036890">
    <property type="entry name" value="HATPase_C_sf"/>
</dbReference>
<dbReference type="InterPro" id="IPR002099">
    <property type="entry name" value="MutL/Mlh/PMS"/>
</dbReference>
<dbReference type="InterPro" id="IPR038973">
    <property type="entry name" value="MutL/Mlh/Pms-like"/>
</dbReference>
<dbReference type="InterPro" id="IPR014790">
    <property type="entry name" value="MutL_C"/>
</dbReference>
<dbReference type="InterPro" id="IPR042120">
    <property type="entry name" value="MutL_C_dimsub"/>
</dbReference>
<dbReference type="InterPro" id="IPR042121">
    <property type="entry name" value="MutL_C_regsub"/>
</dbReference>
<dbReference type="InterPro" id="IPR037198">
    <property type="entry name" value="MutL_C_sf"/>
</dbReference>
<dbReference type="InterPro" id="IPR020568">
    <property type="entry name" value="Ribosomal_Su5_D2-typ_SF"/>
</dbReference>
<dbReference type="InterPro" id="IPR014721">
    <property type="entry name" value="Ribsml_uS5_D2-typ_fold_subgr"/>
</dbReference>
<dbReference type="NCBIfam" id="TIGR00585">
    <property type="entry name" value="mutl"/>
    <property type="match status" value="1"/>
</dbReference>
<dbReference type="NCBIfam" id="NF000948">
    <property type="entry name" value="PRK00095.1-1"/>
    <property type="match status" value="1"/>
</dbReference>
<dbReference type="PANTHER" id="PTHR10073">
    <property type="entry name" value="DNA MISMATCH REPAIR PROTEIN MLH, PMS, MUTL"/>
    <property type="match status" value="1"/>
</dbReference>
<dbReference type="PANTHER" id="PTHR10073:SF12">
    <property type="entry name" value="DNA MISMATCH REPAIR PROTEIN MLH1"/>
    <property type="match status" value="1"/>
</dbReference>
<dbReference type="Pfam" id="PF01119">
    <property type="entry name" value="DNA_mis_repair"/>
    <property type="match status" value="1"/>
</dbReference>
<dbReference type="Pfam" id="PF13589">
    <property type="entry name" value="HATPase_c_3"/>
    <property type="match status" value="1"/>
</dbReference>
<dbReference type="Pfam" id="PF08676">
    <property type="entry name" value="MutL_C"/>
    <property type="match status" value="1"/>
</dbReference>
<dbReference type="SMART" id="SM01340">
    <property type="entry name" value="DNA_mis_repair"/>
    <property type="match status" value="1"/>
</dbReference>
<dbReference type="SMART" id="SM00853">
    <property type="entry name" value="MutL_C"/>
    <property type="match status" value="1"/>
</dbReference>
<dbReference type="SUPFAM" id="SSF55874">
    <property type="entry name" value="ATPase domain of HSP90 chaperone/DNA topoisomerase II/histidine kinase"/>
    <property type="match status" value="1"/>
</dbReference>
<dbReference type="SUPFAM" id="SSF118116">
    <property type="entry name" value="DNA mismatch repair protein MutL"/>
    <property type="match status" value="1"/>
</dbReference>
<dbReference type="SUPFAM" id="SSF54211">
    <property type="entry name" value="Ribosomal protein S5 domain 2-like"/>
    <property type="match status" value="1"/>
</dbReference>
<dbReference type="PROSITE" id="PS00058">
    <property type="entry name" value="DNA_MISMATCH_REPAIR_1"/>
    <property type="match status" value="1"/>
</dbReference>
<name>MUTL_YERPG</name>
<proteinExistence type="inferred from homology"/>
<comment type="function">
    <text evidence="1">This protein is involved in the repair of mismatches in DNA. It is required for dam-dependent methyl-directed DNA mismatch repair. May act as a 'molecular matchmaker', a protein that promotes the formation of a stable complex between two or more DNA-binding proteins in an ATP-dependent manner without itself being part of a final effector complex.</text>
</comment>
<comment type="similarity">
    <text evidence="1">Belongs to the DNA mismatch repair MutL/HexB family.</text>
</comment>
<protein>
    <recommendedName>
        <fullName evidence="1">DNA mismatch repair protein MutL</fullName>
    </recommendedName>
</protein>
<accession>A9QYN3</accession>
<sequence>MPIQILPPQLANQIAAGEVVERPASVVKELVENSLDAGATRIDIDIERGGAKLIRIRDNGCGISKDDLALALARHATSKISSLEDLEAILSMGFRGEALASISSVSRLILTSRTAEQSEAWQAYAEGRDMAVTIKPAAHPVGSTLEVLDLFYNTPARRKFMRTEKTEFGHIDEVVRRIALARFDVAINLNHNGKLIRQYRAAPDPAQHERRLASICGPAFLQHALAIAWQHGDLNIHGWVADPAASHTLSEMQYCYVNNRMMRDRLINHAIRQAYQDRLNDAQQPAYVLYLDIDPHQVDVNVHPAKHEVRFHQARLVHDFIYQAVTAVLQQTNAPILNISEEGEVDAPRWQQENRVAAGTNKYAQPEAAKSSAAEQAVARERSSARERAALAYKEDHPYQKQQGELYRQLLQPSAAAKPATSPAAIPASSVSSPSIPVQRITQAEEPLHGDNYSFGRVLTVFPPCYALIEYQGGVALLSLAVAERWLKQAQLSPPEEGLRPQPLLIPLKITLDKNEIAACQNHEKLLITMGIELSVEQGRATLRAVSLPLRQQNLQKLIPELLGYLSQHEEISPDTLATWLARHLGSEHEVWNVSQAIQLLTEVERLCPQLVQSPPAGLLQPIDIKAALATLTHE</sequence>
<keyword id="KW-0227">DNA damage</keyword>
<keyword id="KW-0234">DNA repair</keyword>